<name>3SAS_NAJSG</name>
<organism>
    <name type="scientific">Naja sagittifera</name>
    <name type="common">Andaman cobra</name>
    <dbReference type="NCBI Taxonomy" id="195058"/>
    <lineage>
        <taxon>Eukaryota</taxon>
        <taxon>Metazoa</taxon>
        <taxon>Chordata</taxon>
        <taxon>Craniata</taxon>
        <taxon>Vertebrata</taxon>
        <taxon>Euteleostomi</taxon>
        <taxon>Lepidosauria</taxon>
        <taxon>Squamata</taxon>
        <taxon>Bifurcata</taxon>
        <taxon>Unidentata</taxon>
        <taxon>Episquamata</taxon>
        <taxon>Toxicofera</taxon>
        <taxon>Serpentes</taxon>
        <taxon>Colubroidea</taxon>
        <taxon>Elapidae</taxon>
        <taxon>Elapinae</taxon>
        <taxon>Naja</taxon>
    </lineage>
</organism>
<reference key="1">
    <citation type="submission" date="2002-05" db="UniProtKB">
        <title>Purification and sequence determination of a cardiotoxin from Naja naja sagittifera (South Indian cobra).</title>
        <authorList>
            <person name="Sharma S."/>
            <person name="Singh R.K."/>
            <person name="Srinivasan A."/>
            <person name="Singh T.P."/>
        </authorList>
    </citation>
    <scope>PROTEIN SEQUENCE</scope>
    <scope>SUBCELLULAR LOCATION</scope>
    <source>
        <tissue>Venom</tissue>
    </source>
</reference>
<reference key="2">
    <citation type="journal article" date="2008" name="Acta Crystallogr. F">
        <title>Isolation, purification, crystallization and preliminary crystallographic studies of sagitoxin, an oligomeric cardiotoxin from the venom of Naja naja saggitifera.</title>
        <authorList>
            <person name="Mir R."/>
            <person name="Sinha M."/>
            <person name="Sharma S."/>
            <person name="Singh N."/>
            <person name="Kaur P."/>
            <person name="Srinivasan A."/>
            <person name="Singh T.P."/>
        </authorList>
    </citation>
    <scope>CRYSTALLIZATION</scope>
    <scope>SUBUNIT</scope>
    <source>
        <tissue>Venom</tissue>
    </source>
</reference>
<dbReference type="SMR" id="P83345"/>
<dbReference type="GO" id="GO:0005576">
    <property type="term" value="C:extracellular region"/>
    <property type="evidence" value="ECO:0007669"/>
    <property type="project" value="UniProtKB-SubCell"/>
</dbReference>
<dbReference type="GO" id="GO:0016020">
    <property type="term" value="C:membrane"/>
    <property type="evidence" value="ECO:0007669"/>
    <property type="project" value="UniProtKB-KW"/>
</dbReference>
<dbReference type="GO" id="GO:0044218">
    <property type="term" value="C:other organism cell membrane"/>
    <property type="evidence" value="ECO:0007669"/>
    <property type="project" value="UniProtKB-KW"/>
</dbReference>
<dbReference type="GO" id="GO:0090729">
    <property type="term" value="F:toxin activity"/>
    <property type="evidence" value="ECO:0007669"/>
    <property type="project" value="UniProtKB-KW"/>
</dbReference>
<dbReference type="GO" id="GO:0031640">
    <property type="term" value="P:killing of cells of another organism"/>
    <property type="evidence" value="ECO:0007669"/>
    <property type="project" value="UniProtKB-KW"/>
</dbReference>
<dbReference type="CDD" id="cd00206">
    <property type="entry name" value="TFP_snake_toxin"/>
    <property type="match status" value="1"/>
</dbReference>
<dbReference type="FunFam" id="2.10.60.10:FF:000024">
    <property type="entry name" value="Cytotoxin 1"/>
    <property type="match status" value="1"/>
</dbReference>
<dbReference type="Gene3D" id="2.10.60.10">
    <property type="entry name" value="CD59"/>
    <property type="match status" value="1"/>
</dbReference>
<dbReference type="InterPro" id="IPR003572">
    <property type="entry name" value="Cytotoxin_Cobra"/>
</dbReference>
<dbReference type="InterPro" id="IPR003571">
    <property type="entry name" value="Snake_3FTx"/>
</dbReference>
<dbReference type="InterPro" id="IPR045860">
    <property type="entry name" value="Snake_toxin-like_sf"/>
</dbReference>
<dbReference type="InterPro" id="IPR018354">
    <property type="entry name" value="Snake_toxin_con_site"/>
</dbReference>
<dbReference type="InterPro" id="IPR054131">
    <property type="entry name" value="Toxin_cobra-type"/>
</dbReference>
<dbReference type="Pfam" id="PF21947">
    <property type="entry name" value="Toxin_cobra-type"/>
    <property type="match status" value="1"/>
</dbReference>
<dbReference type="PRINTS" id="PR00282">
    <property type="entry name" value="CYTOTOXIN"/>
</dbReference>
<dbReference type="SUPFAM" id="SSF57302">
    <property type="entry name" value="Snake toxin-like"/>
    <property type="match status" value="1"/>
</dbReference>
<dbReference type="PROSITE" id="PS00272">
    <property type="entry name" value="SNAKE_TOXIN"/>
    <property type="match status" value="1"/>
</dbReference>
<proteinExistence type="evidence at protein level"/>
<evidence type="ECO:0000250" key="1">
    <source>
        <dbReference type="UniProtKB" id="P60301"/>
    </source>
</evidence>
<evidence type="ECO:0000250" key="2">
    <source>
        <dbReference type="UniProtKB" id="P60304"/>
    </source>
</evidence>
<evidence type="ECO:0000269" key="3">
    <source>
    </source>
</evidence>
<evidence type="ECO:0000269" key="4">
    <source ref="1"/>
</evidence>
<evidence type="ECO:0000305" key="5"/>
<protein>
    <recommendedName>
        <fullName>Cytotoxin sagitoxin</fullName>
    </recommendedName>
    <alternativeName>
        <fullName>Cardiotoxin sagitoxin</fullName>
    </alternativeName>
</protein>
<comment type="function">
    <text evidence="1 2">Shows cytolytic activity on many different cells by forming pore in lipid membranes. In vivo, increases heart rate or kill the animal by cardiac arrest. In addition, it binds to heparin with high affinity, interacts with Kv channel-interacting protein 1 (KCNIP1) in a calcium-independent manner, and binds to integrin alpha-V/beta-3 (ITGAV/ITGB3) with moderate affinity.</text>
</comment>
<comment type="subunit">
    <text evidence="1 3">Monomer in solution (By similarity); Homodimer and oligomer (homohexamer (PubMed:18540072)) in the presence of negatively charged lipids forming a pore with a size ranging between 20 and 30 Angstroms (By similarity).</text>
</comment>
<comment type="subcellular location">
    <subcellularLocation>
        <location evidence="4">Secreted</location>
    </subcellularLocation>
    <subcellularLocation>
        <location evidence="1">Target cell membrane</location>
    </subcellularLocation>
</comment>
<comment type="tissue specificity">
    <text evidence="5">Expressed by the venom gland.</text>
</comment>
<comment type="similarity">
    <text evidence="5">Belongs to the three-finger toxin family. Short-chain subfamily. Type IA cytotoxin sub-subfamily.</text>
</comment>
<keyword id="KW-0123">Cardiotoxin</keyword>
<keyword id="KW-0204">Cytolysis</keyword>
<keyword id="KW-0903">Direct protein sequencing</keyword>
<keyword id="KW-1015">Disulfide bond</keyword>
<keyword id="KW-0472">Membrane</keyword>
<keyword id="KW-0964">Secreted</keyword>
<keyword id="KW-1052">Target cell membrane</keyword>
<keyword id="KW-1053">Target membrane</keyword>
<keyword id="KW-0800">Toxin</keyword>
<accession>P83345</accession>
<feature type="chain" id="PRO_0000093520" description="Cytotoxin sagitoxin" evidence="4">
    <location>
        <begin position="1"/>
        <end position="60"/>
    </location>
</feature>
<feature type="disulfide bond" evidence="1">
    <location>
        <begin position="3"/>
        <end position="21"/>
    </location>
</feature>
<feature type="disulfide bond" evidence="1">
    <location>
        <begin position="14"/>
        <end position="38"/>
    </location>
</feature>
<feature type="disulfide bond" evidence="1">
    <location>
        <begin position="42"/>
        <end position="53"/>
    </location>
</feature>
<feature type="disulfide bond" evidence="1">
    <location>
        <begin position="54"/>
        <end position="59"/>
    </location>
</feature>
<sequence length="60" mass="6802">LKCNKLVPLAYKTCPAGKNLCYKMYMVANKKVPVKRGCIDVCPKKSLLVKYECCNTDRCN</sequence>